<protein>
    <recommendedName>
        <fullName evidence="1">Cytochrome b559 subunit beta</fullName>
    </recommendedName>
    <alternativeName>
        <fullName evidence="1">PSII reaction center subunit VI</fullName>
    </alternativeName>
</protein>
<accession>Q85X32</accession>
<name>PSBF_PINKO</name>
<organism>
    <name type="scientific">Pinus koraiensis</name>
    <name type="common">Korean pine</name>
    <dbReference type="NCBI Taxonomy" id="88728"/>
    <lineage>
        <taxon>Eukaryota</taxon>
        <taxon>Viridiplantae</taxon>
        <taxon>Streptophyta</taxon>
        <taxon>Embryophyta</taxon>
        <taxon>Tracheophyta</taxon>
        <taxon>Spermatophyta</taxon>
        <taxon>Pinopsida</taxon>
        <taxon>Pinidae</taxon>
        <taxon>Conifers I</taxon>
        <taxon>Pinales</taxon>
        <taxon>Pinaceae</taxon>
        <taxon>Pinus</taxon>
        <taxon>Pinus subgen. Strobus</taxon>
    </lineage>
</organism>
<sequence length="39" mass="4468">MTLDRTFPIFTVRWLAVHGLAVPTVFFLGSISAMQFIQR</sequence>
<keyword id="KW-0150">Chloroplast</keyword>
<keyword id="KW-0249">Electron transport</keyword>
<keyword id="KW-0349">Heme</keyword>
<keyword id="KW-0408">Iron</keyword>
<keyword id="KW-0472">Membrane</keyword>
<keyword id="KW-0479">Metal-binding</keyword>
<keyword id="KW-0602">Photosynthesis</keyword>
<keyword id="KW-0604">Photosystem II</keyword>
<keyword id="KW-0934">Plastid</keyword>
<keyword id="KW-0793">Thylakoid</keyword>
<keyword id="KW-0812">Transmembrane</keyword>
<keyword id="KW-1133">Transmembrane helix</keyword>
<keyword id="KW-0813">Transport</keyword>
<feature type="chain" id="PRO_0000200440" description="Cytochrome b559 subunit beta">
    <location>
        <begin position="1"/>
        <end position="39"/>
    </location>
</feature>
<feature type="transmembrane region" description="Helical" evidence="1">
    <location>
        <begin position="14"/>
        <end position="30"/>
    </location>
</feature>
<feature type="binding site" description="axial binding residue" evidence="1">
    <location>
        <position position="18"/>
    </location>
    <ligand>
        <name>heme</name>
        <dbReference type="ChEBI" id="CHEBI:30413"/>
        <note>ligand shared with alpha subunit</note>
    </ligand>
    <ligandPart>
        <name>Fe</name>
        <dbReference type="ChEBI" id="CHEBI:18248"/>
    </ligandPart>
</feature>
<evidence type="ECO:0000255" key="1">
    <source>
        <dbReference type="HAMAP-Rule" id="MF_00643"/>
    </source>
</evidence>
<reference key="1">
    <citation type="submission" date="2003-02" db="EMBL/GenBank/DDBJ databases">
        <title>Complete nucleotide sequence of Pinus koraiensis.</title>
        <authorList>
            <person name="Noh E.W."/>
            <person name="Lee J.S."/>
            <person name="Choi Y.I."/>
            <person name="Han M.S."/>
            <person name="Yi Y.S."/>
            <person name="Han S.U."/>
        </authorList>
    </citation>
    <scope>NUCLEOTIDE SEQUENCE [LARGE SCALE GENOMIC DNA]</scope>
    <source>
        <strain>KangWon16</strain>
    </source>
</reference>
<comment type="function">
    <text evidence="1">This b-type cytochrome is tightly associated with the reaction center of photosystem II (PSII). PSII is a light-driven water:plastoquinone oxidoreductase that uses light energy to abstract electrons from H(2)O, generating O(2) and a proton gradient subsequently used for ATP formation. It consists of a core antenna complex that captures photons, and an electron transfer chain that converts photonic excitation into a charge separation.</text>
</comment>
<comment type="cofactor">
    <cofactor evidence="1">
        <name>heme b</name>
        <dbReference type="ChEBI" id="CHEBI:60344"/>
    </cofactor>
    <text evidence="1">With its partner (PsbE) binds heme. PSII binds additional chlorophylls, carotenoids and specific lipids.</text>
</comment>
<comment type="subunit">
    <text evidence="1">Heterodimer of an alpha subunit and a beta subunit. PSII is composed of 1 copy each of membrane proteins PsbA, PsbB, PsbC, PsbD, PsbE, PsbF, PsbH, PsbI, PsbJ, PsbK, PsbL, PsbM, PsbT, PsbX, PsbY, PsbZ, Psb30/Ycf12, at least 3 peripheral proteins of the oxygen-evolving complex and a large number of cofactors. It forms dimeric complexes.</text>
</comment>
<comment type="subcellular location">
    <subcellularLocation>
        <location evidence="1">Plastid</location>
        <location evidence="1">Chloroplast thylakoid membrane</location>
        <topology evidence="1">Single-pass membrane protein</topology>
    </subcellularLocation>
</comment>
<comment type="similarity">
    <text evidence="1">Belongs to the PsbE/PsbF family.</text>
</comment>
<dbReference type="EMBL" id="AY228468">
    <property type="protein sequence ID" value="AAO74033.1"/>
    <property type="molecule type" value="Genomic_DNA"/>
</dbReference>
<dbReference type="RefSeq" id="NP_817185.1">
    <property type="nucleotide sequence ID" value="NC_004677.2"/>
</dbReference>
<dbReference type="SMR" id="Q85X32"/>
<dbReference type="GeneID" id="806920"/>
<dbReference type="GO" id="GO:0009535">
    <property type="term" value="C:chloroplast thylakoid membrane"/>
    <property type="evidence" value="ECO:0007669"/>
    <property type="project" value="UniProtKB-SubCell"/>
</dbReference>
<dbReference type="GO" id="GO:0009539">
    <property type="term" value="C:photosystem II reaction center"/>
    <property type="evidence" value="ECO:0007669"/>
    <property type="project" value="InterPro"/>
</dbReference>
<dbReference type="GO" id="GO:0009055">
    <property type="term" value="F:electron transfer activity"/>
    <property type="evidence" value="ECO:0007669"/>
    <property type="project" value="UniProtKB-UniRule"/>
</dbReference>
<dbReference type="GO" id="GO:0020037">
    <property type="term" value="F:heme binding"/>
    <property type="evidence" value="ECO:0007669"/>
    <property type="project" value="InterPro"/>
</dbReference>
<dbReference type="GO" id="GO:0005506">
    <property type="term" value="F:iron ion binding"/>
    <property type="evidence" value="ECO:0007669"/>
    <property type="project" value="UniProtKB-UniRule"/>
</dbReference>
<dbReference type="GO" id="GO:0009767">
    <property type="term" value="P:photosynthetic electron transport chain"/>
    <property type="evidence" value="ECO:0007669"/>
    <property type="project" value="InterPro"/>
</dbReference>
<dbReference type="HAMAP" id="MF_00643">
    <property type="entry name" value="PSII_PsbF"/>
    <property type="match status" value="1"/>
</dbReference>
<dbReference type="InterPro" id="IPR006241">
    <property type="entry name" value="PSII_cyt_b559_bsu"/>
</dbReference>
<dbReference type="InterPro" id="IPR006216">
    <property type="entry name" value="PSII_cyt_b559_CS"/>
</dbReference>
<dbReference type="InterPro" id="IPR013081">
    <property type="entry name" value="PSII_cyt_b559_N"/>
</dbReference>
<dbReference type="NCBIfam" id="TIGR01333">
    <property type="entry name" value="cyt_b559_beta"/>
    <property type="match status" value="1"/>
</dbReference>
<dbReference type="Pfam" id="PF00283">
    <property type="entry name" value="Cytochrom_B559"/>
    <property type="match status" value="1"/>
</dbReference>
<dbReference type="PIRSF" id="PIRSF000037">
    <property type="entry name" value="PsbF"/>
    <property type="match status" value="1"/>
</dbReference>
<dbReference type="SUPFAM" id="SSF161045">
    <property type="entry name" value="Cytochrome b559 subunits"/>
    <property type="match status" value="1"/>
</dbReference>
<dbReference type="PROSITE" id="PS00537">
    <property type="entry name" value="CYTOCHROME_B559"/>
    <property type="match status" value="1"/>
</dbReference>
<gene>
    <name evidence="1" type="primary">psbF</name>
</gene>
<proteinExistence type="inferred from homology"/>
<geneLocation type="chloroplast"/>